<proteinExistence type="inferred from homology"/>
<name>PUR9_CLOB8</name>
<feature type="chain" id="PRO_1000076478" description="Bifunctional purine biosynthesis protein PurH">
    <location>
        <begin position="1"/>
        <end position="502"/>
    </location>
</feature>
<feature type="domain" description="MGS-like" evidence="2">
    <location>
        <begin position="1"/>
        <end position="144"/>
    </location>
</feature>
<reference key="1">
    <citation type="submission" date="2007-06" db="EMBL/GenBank/DDBJ databases">
        <title>Complete sequence of Clostridium beijerinckii NCIMB 8052.</title>
        <authorList>
            <consortium name="US DOE Joint Genome Institute"/>
            <person name="Copeland A."/>
            <person name="Lucas S."/>
            <person name="Lapidus A."/>
            <person name="Barry K."/>
            <person name="Detter J.C."/>
            <person name="Glavina del Rio T."/>
            <person name="Hammon N."/>
            <person name="Israni S."/>
            <person name="Dalin E."/>
            <person name="Tice H."/>
            <person name="Pitluck S."/>
            <person name="Sims D."/>
            <person name="Brettin T."/>
            <person name="Bruce D."/>
            <person name="Tapia R."/>
            <person name="Brainard J."/>
            <person name="Schmutz J."/>
            <person name="Larimer F."/>
            <person name="Land M."/>
            <person name="Hauser L."/>
            <person name="Kyrpides N."/>
            <person name="Mikhailova N."/>
            <person name="Bennet G."/>
            <person name="Cann I."/>
            <person name="Chen J.-S."/>
            <person name="Contreras A.L."/>
            <person name="Jones D."/>
            <person name="Kashket E."/>
            <person name="Mitchell W."/>
            <person name="Stoddard S."/>
            <person name="Schwarz W."/>
            <person name="Qureshi N."/>
            <person name="Young M."/>
            <person name="Shi Z."/>
            <person name="Ezeji T."/>
            <person name="White B."/>
            <person name="Blaschek H."/>
            <person name="Richardson P."/>
        </authorList>
    </citation>
    <scope>NUCLEOTIDE SEQUENCE [LARGE SCALE GENOMIC DNA]</scope>
    <source>
        <strain>ATCC 51743 / NCIMB 8052</strain>
    </source>
</reference>
<gene>
    <name evidence="1" type="primary">purH</name>
    <name type="ordered locus">Cbei_1059</name>
</gene>
<evidence type="ECO:0000255" key="1">
    <source>
        <dbReference type="HAMAP-Rule" id="MF_00139"/>
    </source>
</evidence>
<evidence type="ECO:0000255" key="2">
    <source>
        <dbReference type="PROSITE-ProRule" id="PRU01202"/>
    </source>
</evidence>
<organism>
    <name type="scientific">Clostridium beijerinckii (strain ATCC 51743 / NCIMB 8052)</name>
    <name type="common">Clostridium acetobutylicum</name>
    <dbReference type="NCBI Taxonomy" id="290402"/>
    <lineage>
        <taxon>Bacteria</taxon>
        <taxon>Bacillati</taxon>
        <taxon>Bacillota</taxon>
        <taxon>Clostridia</taxon>
        <taxon>Eubacteriales</taxon>
        <taxon>Clostridiaceae</taxon>
        <taxon>Clostridium</taxon>
    </lineage>
</organism>
<comment type="catalytic activity">
    <reaction evidence="1">
        <text>(6R)-10-formyltetrahydrofolate + 5-amino-1-(5-phospho-beta-D-ribosyl)imidazole-4-carboxamide = 5-formamido-1-(5-phospho-D-ribosyl)imidazole-4-carboxamide + (6S)-5,6,7,8-tetrahydrofolate</text>
        <dbReference type="Rhea" id="RHEA:22192"/>
        <dbReference type="ChEBI" id="CHEBI:57453"/>
        <dbReference type="ChEBI" id="CHEBI:58467"/>
        <dbReference type="ChEBI" id="CHEBI:58475"/>
        <dbReference type="ChEBI" id="CHEBI:195366"/>
        <dbReference type="EC" id="2.1.2.3"/>
    </reaction>
</comment>
<comment type="catalytic activity">
    <reaction evidence="1">
        <text>IMP + H2O = 5-formamido-1-(5-phospho-D-ribosyl)imidazole-4-carboxamide</text>
        <dbReference type="Rhea" id="RHEA:18445"/>
        <dbReference type="ChEBI" id="CHEBI:15377"/>
        <dbReference type="ChEBI" id="CHEBI:58053"/>
        <dbReference type="ChEBI" id="CHEBI:58467"/>
        <dbReference type="EC" id="3.5.4.10"/>
    </reaction>
</comment>
<comment type="pathway">
    <text evidence="1">Purine metabolism; IMP biosynthesis via de novo pathway; 5-formamido-1-(5-phospho-D-ribosyl)imidazole-4-carboxamide from 5-amino-1-(5-phospho-D-ribosyl)imidazole-4-carboxamide (10-formyl THF route): step 1/1.</text>
</comment>
<comment type="pathway">
    <text evidence="1">Purine metabolism; IMP biosynthesis via de novo pathway; IMP from 5-formamido-1-(5-phospho-D-ribosyl)imidazole-4-carboxamide: step 1/1.</text>
</comment>
<comment type="domain">
    <text evidence="1">The IMP cyclohydrolase activity resides in the N-terminal region.</text>
</comment>
<comment type="similarity">
    <text evidence="1">Belongs to the PurH family.</text>
</comment>
<protein>
    <recommendedName>
        <fullName evidence="1">Bifunctional purine biosynthesis protein PurH</fullName>
    </recommendedName>
    <domain>
        <recommendedName>
            <fullName evidence="1">Phosphoribosylaminoimidazolecarboxamide formyltransferase</fullName>
            <ecNumber evidence="1">2.1.2.3</ecNumber>
        </recommendedName>
        <alternativeName>
            <fullName evidence="1">AICAR transformylase</fullName>
        </alternativeName>
    </domain>
    <domain>
        <recommendedName>
            <fullName evidence="1">IMP cyclohydrolase</fullName>
            <ecNumber evidence="1">3.5.4.10</ecNumber>
        </recommendedName>
        <alternativeName>
            <fullName evidence="1">ATIC</fullName>
        </alternativeName>
        <alternativeName>
            <fullName evidence="1">IMP synthase</fullName>
        </alternativeName>
        <alternativeName>
            <fullName evidence="1">Inosinicase</fullName>
        </alternativeName>
    </domain>
</protein>
<accession>A6LSB3</accession>
<keyword id="KW-0378">Hydrolase</keyword>
<keyword id="KW-0511">Multifunctional enzyme</keyword>
<keyword id="KW-0658">Purine biosynthesis</keyword>
<keyword id="KW-0808">Transferase</keyword>
<dbReference type="EC" id="2.1.2.3" evidence="1"/>
<dbReference type="EC" id="3.5.4.10" evidence="1"/>
<dbReference type="EMBL" id="CP000721">
    <property type="protein sequence ID" value="ABR33243.1"/>
    <property type="molecule type" value="Genomic_DNA"/>
</dbReference>
<dbReference type="RefSeq" id="WP_011968402.1">
    <property type="nucleotide sequence ID" value="NC_009617.1"/>
</dbReference>
<dbReference type="SMR" id="A6LSB3"/>
<dbReference type="KEGG" id="cbe:Cbei_1059"/>
<dbReference type="eggNOG" id="COG0138">
    <property type="taxonomic scope" value="Bacteria"/>
</dbReference>
<dbReference type="HOGENOM" id="CLU_016316_5_2_9"/>
<dbReference type="UniPathway" id="UPA00074">
    <property type="reaction ID" value="UER00133"/>
</dbReference>
<dbReference type="UniPathway" id="UPA00074">
    <property type="reaction ID" value="UER00135"/>
</dbReference>
<dbReference type="Proteomes" id="UP000000565">
    <property type="component" value="Chromosome"/>
</dbReference>
<dbReference type="GO" id="GO:0005829">
    <property type="term" value="C:cytosol"/>
    <property type="evidence" value="ECO:0007669"/>
    <property type="project" value="TreeGrafter"/>
</dbReference>
<dbReference type="GO" id="GO:0003937">
    <property type="term" value="F:IMP cyclohydrolase activity"/>
    <property type="evidence" value="ECO:0007669"/>
    <property type="project" value="UniProtKB-UniRule"/>
</dbReference>
<dbReference type="GO" id="GO:0004643">
    <property type="term" value="F:phosphoribosylaminoimidazolecarboxamide formyltransferase activity"/>
    <property type="evidence" value="ECO:0007669"/>
    <property type="project" value="UniProtKB-UniRule"/>
</dbReference>
<dbReference type="GO" id="GO:0006189">
    <property type="term" value="P:'de novo' IMP biosynthetic process"/>
    <property type="evidence" value="ECO:0007669"/>
    <property type="project" value="UniProtKB-UniRule"/>
</dbReference>
<dbReference type="CDD" id="cd01421">
    <property type="entry name" value="IMPCH"/>
    <property type="match status" value="1"/>
</dbReference>
<dbReference type="FunFam" id="3.40.140.20:FF:000001">
    <property type="entry name" value="Bifunctional purine biosynthesis protein PurH"/>
    <property type="match status" value="1"/>
</dbReference>
<dbReference type="FunFam" id="3.40.140.20:FF:000002">
    <property type="entry name" value="Bifunctional purine biosynthesis protein PurH"/>
    <property type="match status" value="1"/>
</dbReference>
<dbReference type="FunFam" id="3.40.50.1380:FF:000001">
    <property type="entry name" value="Bifunctional purine biosynthesis protein PurH"/>
    <property type="match status" value="1"/>
</dbReference>
<dbReference type="Gene3D" id="3.40.140.20">
    <property type="match status" value="2"/>
</dbReference>
<dbReference type="Gene3D" id="3.40.50.1380">
    <property type="entry name" value="Methylglyoxal synthase-like domain"/>
    <property type="match status" value="1"/>
</dbReference>
<dbReference type="HAMAP" id="MF_00139">
    <property type="entry name" value="PurH"/>
    <property type="match status" value="1"/>
</dbReference>
<dbReference type="InterPro" id="IPR024051">
    <property type="entry name" value="AICAR_Tfase_dup_dom_sf"/>
</dbReference>
<dbReference type="InterPro" id="IPR016193">
    <property type="entry name" value="Cytidine_deaminase-like"/>
</dbReference>
<dbReference type="InterPro" id="IPR011607">
    <property type="entry name" value="MGS-like_dom"/>
</dbReference>
<dbReference type="InterPro" id="IPR036914">
    <property type="entry name" value="MGS-like_dom_sf"/>
</dbReference>
<dbReference type="InterPro" id="IPR002695">
    <property type="entry name" value="PurH-like"/>
</dbReference>
<dbReference type="NCBIfam" id="NF002049">
    <property type="entry name" value="PRK00881.1"/>
    <property type="match status" value="1"/>
</dbReference>
<dbReference type="NCBIfam" id="TIGR00355">
    <property type="entry name" value="purH"/>
    <property type="match status" value="1"/>
</dbReference>
<dbReference type="PANTHER" id="PTHR11692:SF0">
    <property type="entry name" value="BIFUNCTIONAL PURINE BIOSYNTHESIS PROTEIN ATIC"/>
    <property type="match status" value="1"/>
</dbReference>
<dbReference type="PANTHER" id="PTHR11692">
    <property type="entry name" value="BIFUNCTIONAL PURINE BIOSYNTHESIS PROTEIN PURH"/>
    <property type="match status" value="1"/>
</dbReference>
<dbReference type="Pfam" id="PF01808">
    <property type="entry name" value="AICARFT_IMPCHas"/>
    <property type="match status" value="1"/>
</dbReference>
<dbReference type="Pfam" id="PF02142">
    <property type="entry name" value="MGS"/>
    <property type="match status" value="1"/>
</dbReference>
<dbReference type="PIRSF" id="PIRSF000414">
    <property type="entry name" value="AICARFT_IMPCHas"/>
    <property type="match status" value="1"/>
</dbReference>
<dbReference type="SMART" id="SM00798">
    <property type="entry name" value="AICARFT_IMPCHas"/>
    <property type="match status" value="1"/>
</dbReference>
<dbReference type="SMART" id="SM00851">
    <property type="entry name" value="MGS"/>
    <property type="match status" value="1"/>
</dbReference>
<dbReference type="SUPFAM" id="SSF53927">
    <property type="entry name" value="Cytidine deaminase-like"/>
    <property type="match status" value="1"/>
</dbReference>
<dbReference type="SUPFAM" id="SSF52335">
    <property type="entry name" value="Methylglyoxal synthase-like"/>
    <property type="match status" value="1"/>
</dbReference>
<dbReference type="PROSITE" id="PS51855">
    <property type="entry name" value="MGS"/>
    <property type="match status" value="1"/>
</dbReference>
<sequence>MKKRALISVFDKEGVLDFAKFLVSKDVEIVSTGGTYKYLKENGLNVIEINEVTDFPEMLDGRVKTLHPLVHAGILAIRDNEEHMNTLKGRNIHTIDYVVVNLYPFFEKVKEDLEFEEKVEFIDIGGPTMLRAAAKNFQDVVVISDKNDYKVVMEEIEANGETSYKTKKKLAGKVFNLMSAYDGAISNFLLADEEEEYPEYLSVSYKKMQSLRYGENSHQTAAVYASTMLDGAMNTFETLNGKELSYNNFKDVDIAWKCANEFDEPACCALKHNTPCGVAIGKDSYEAYMKAYEVDPTSIFGGIIGFNRKVDKKTAEEMVKIFLEVIAAPEYDEDALEVLKTKKNLRVLKFHNTPKADKYMVTVDGAMLVQEEDNKLVEEIKVVTEKKPTDEEMKDLLFGMKVVKYVKSNAIVVAHNGIALGIGGGQVNRIWPTEDALKRGKGATILASDAYFPFGDVAETAAKAGIKAIIQPGGSIRDQESIDVCNKYGISMVFTGYRHFKH</sequence>